<feature type="chain" id="PRO_1000118366" description="ATP-dependent Clp protease ATP-binding subunit ClpX">
    <location>
        <begin position="1"/>
        <end position="424"/>
    </location>
</feature>
<feature type="domain" description="ClpX-type ZB" evidence="2">
    <location>
        <begin position="2"/>
        <end position="56"/>
    </location>
</feature>
<feature type="binding site" evidence="2">
    <location>
        <position position="15"/>
    </location>
    <ligand>
        <name>Zn(2+)</name>
        <dbReference type="ChEBI" id="CHEBI:29105"/>
    </ligand>
</feature>
<feature type="binding site" evidence="2">
    <location>
        <position position="18"/>
    </location>
    <ligand>
        <name>Zn(2+)</name>
        <dbReference type="ChEBI" id="CHEBI:29105"/>
    </ligand>
</feature>
<feature type="binding site" evidence="2">
    <location>
        <position position="37"/>
    </location>
    <ligand>
        <name>Zn(2+)</name>
        <dbReference type="ChEBI" id="CHEBI:29105"/>
    </ligand>
</feature>
<feature type="binding site" evidence="2">
    <location>
        <position position="40"/>
    </location>
    <ligand>
        <name>Zn(2+)</name>
        <dbReference type="ChEBI" id="CHEBI:29105"/>
    </ligand>
</feature>
<feature type="binding site" evidence="1">
    <location>
        <begin position="120"/>
        <end position="127"/>
    </location>
    <ligand>
        <name>ATP</name>
        <dbReference type="ChEBI" id="CHEBI:30616"/>
    </ligand>
</feature>
<comment type="function">
    <text evidence="1">ATP-dependent specificity component of the Clp protease. It directs the protease to specific substrates. Can perform chaperone functions in the absence of ClpP.</text>
</comment>
<comment type="subunit">
    <text evidence="1">Component of the ClpX-ClpP complex. Forms a hexameric ring that, in the presence of ATP, binds to fourteen ClpP subunits assembled into a disk-like structure with a central cavity, resembling the structure of eukaryotic proteasomes.</text>
</comment>
<comment type="similarity">
    <text evidence="1">Belongs to the ClpX chaperone family.</text>
</comment>
<reference key="1">
    <citation type="journal article" date="2009" name="PLoS Genet.">
        <title>Organised genome dynamics in the Escherichia coli species results in highly diverse adaptive paths.</title>
        <authorList>
            <person name="Touchon M."/>
            <person name="Hoede C."/>
            <person name="Tenaillon O."/>
            <person name="Barbe V."/>
            <person name="Baeriswyl S."/>
            <person name="Bidet P."/>
            <person name="Bingen E."/>
            <person name="Bonacorsi S."/>
            <person name="Bouchier C."/>
            <person name="Bouvet O."/>
            <person name="Calteau A."/>
            <person name="Chiapello H."/>
            <person name="Clermont O."/>
            <person name="Cruveiller S."/>
            <person name="Danchin A."/>
            <person name="Diard M."/>
            <person name="Dossat C."/>
            <person name="Karoui M.E."/>
            <person name="Frapy E."/>
            <person name="Garry L."/>
            <person name="Ghigo J.M."/>
            <person name="Gilles A.M."/>
            <person name="Johnson J."/>
            <person name="Le Bouguenec C."/>
            <person name="Lescat M."/>
            <person name="Mangenot S."/>
            <person name="Martinez-Jehanne V."/>
            <person name="Matic I."/>
            <person name="Nassif X."/>
            <person name="Oztas S."/>
            <person name="Petit M.A."/>
            <person name="Pichon C."/>
            <person name="Rouy Z."/>
            <person name="Ruf C.S."/>
            <person name="Schneider D."/>
            <person name="Tourret J."/>
            <person name="Vacherie B."/>
            <person name="Vallenet D."/>
            <person name="Medigue C."/>
            <person name="Rocha E.P.C."/>
            <person name="Denamur E."/>
        </authorList>
    </citation>
    <scope>NUCLEOTIDE SEQUENCE [LARGE SCALE GENOMIC DNA]</scope>
    <source>
        <strain>S88 / ExPEC</strain>
    </source>
</reference>
<sequence>MTDKRKDGSGKLLYCSFCGKSQHEVRKLIAGPSVYICDECVDLCNDIIREEIKEVAPHRERSALPTPHEIRNHLDDYVIGQEQAKKVLAVAVYNHYKRLRNGDTSNGVELGKSNILLIGPTGSGKTLLAETLARLLDVPFTMADATTLTEAGYVGEDVENIIQKLLQKCDYDVQKAQRGIVYIDEIDKISRKSDNPSITRDVSGEGVQQALLKLIEGTVAAVPPQGGRKHPQQEFLQVDTSKILFICGGAFAGLDKVISHRVETGSGIGFGATVKAKSDKASEGELLAQVEPEDLIKFGLIPEFIGRLPVVATLNELSEEALIQILKEPKNALTKQYQALFNLEGVDLEFRDEALDAIAKKAMARKTGARGLRSIVEAALLDTMYDLPSMEDVEKVVIDESVIDGQSKPLLIYGKPEAQQASGE</sequence>
<proteinExistence type="inferred from homology"/>
<name>CLPX_ECO45</name>
<evidence type="ECO:0000255" key="1">
    <source>
        <dbReference type="HAMAP-Rule" id="MF_00175"/>
    </source>
</evidence>
<evidence type="ECO:0000255" key="2">
    <source>
        <dbReference type="PROSITE-ProRule" id="PRU01250"/>
    </source>
</evidence>
<protein>
    <recommendedName>
        <fullName evidence="1">ATP-dependent Clp protease ATP-binding subunit ClpX</fullName>
    </recommendedName>
</protein>
<organism>
    <name type="scientific">Escherichia coli O45:K1 (strain S88 / ExPEC)</name>
    <dbReference type="NCBI Taxonomy" id="585035"/>
    <lineage>
        <taxon>Bacteria</taxon>
        <taxon>Pseudomonadati</taxon>
        <taxon>Pseudomonadota</taxon>
        <taxon>Gammaproteobacteria</taxon>
        <taxon>Enterobacterales</taxon>
        <taxon>Enterobacteriaceae</taxon>
        <taxon>Escherichia</taxon>
    </lineage>
</organism>
<keyword id="KW-0067">ATP-binding</keyword>
<keyword id="KW-0143">Chaperone</keyword>
<keyword id="KW-0479">Metal-binding</keyword>
<keyword id="KW-0547">Nucleotide-binding</keyword>
<keyword id="KW-1185">Reference proteome</keyword>
<keyword id="KW-0862">Zinc</keyword>
<accession>B7MD97</accession>
<gene>
    <name evidence="1" type="primary">clpX</name>
    <name type="ordered locus">ECS88_0435</name>
</gene>
<dbReference type="EMBL" id="CU928161">
    <property type="protein sequence ID" value="CAR01782.1"/>
    <property type="molecule type" value="Genomic_DNA"/>
</dbReference>
<dbReference type="RefSeq" id="WP_000130305.1">
    <property type="nucleotide sequence ID" value="NC_011742.1"/>
</dbReference>
<dbReference type="SMR" id="B7MD97"/>
<dbReference type="GeneID" id="93777016"/>
<dbReference type="KEGG" id="ecz:ECS88_0435"/>
<dbReference type="HOGENOM" id="CLU_014218_8_2_6"/>
<dbReference type="Proteomes" id="UP000000747">
    <property type="component" value="Chromosome"/>
</dbReference>
<dbReference type="GO" id="GO:0009376">
    <property type="term" value="C:HslUV protease complex"/>
    <property type="evidence" value="ECO:0007669"/>
    <property type="project" value="TreeGrafter"/>
</dbReference>
<dbReference type="GO" id="GO:0005524">
    <property type="term" value="F:ATP binding"/>
    <property type="evidence" value="ECO:0007669"/>
    <property type="project" value="UniProtKB-UniRule"/>
</dbReference>
<dbReference type="GO" id="GO:0016887">
    <property type="term" value="F:ATP hydrolysis activity"/>
    <property type="evidence" value="ECO:0007669"/>
    <property type="project" value="InterPro"/>
</dbReference>
<dbReference type="GO" id="GO:0140662">
    <property type="term" value="F:ATP-dependent protein folding chaperone"/>
    <property type="evidence" value="ECO:0007669"/>
    <property type="project" value="InterPro"/>
</dbReference>
<dbReference type="GO" id="GO:0046983">
    <property type="term" value="F:protein dimerization activity"/>
    <property type="evidence" value="ECO:0007669"/>
    <property type="project" value="InterPro"/>
</dbReference>
<dbReference type="GO" id="GO:0051082">
    <property type="term" value="F:unfolded protein binding"/>
    <property type="evidence" value="ECO:0007669"/>
    <property type="project" value="UniProtKB-UniRule"/>
</dbReference>
<dbReference type="GO" id="GO:0008270">
    <property type="term" value="F:zinc ion binding"/>
    <property type="evidence" value="ECO:0007669"/>
    <property type="project" value="InterPro"/>
</dbReference>
<dbReference type="GO" id="GO:0051301">
    <property type="term" value="P:cell division"/>
    <property type="evidence" value="ECO:0007669"/>
    <property type="project" value="TreeGrafter"/>
</dbReference>
<dbReference type="GO" id="GO:0051603">
    <property type="term" value="P:proteolysis involved in protein catabolic process"/>
    <property type="evidence" value="ECO:0007669"/>
    <property type="project" value="TreeGrafter"/>
</dbReference>
<dbReference type="CDD" id="cd19497">
    <property type="entry name" value="RecA-like_ClpX"/>
    <property type="match status" value="1"/>
</dbReference>
<dbReference type="FunFam" id="1.10.8.60:FF:000002">
    <property type="entry name" value="ATP-dependent Clp protease ATP-binding subunit ClpX"/>
    <property type="match status" value="1"/>
</dbReference>
<dbReference type="FunFam" id="3.40.50.300:FF:000005">
    <property type="entry name" value="ATP-dependent Clp protease ATP-binding subunit ClpX"/>
    <property type="match status" value="1"/>
</dbReference>
<dbReference type="Gene3D" id="1.10.8.60">
    <property type="match status" value="1"/>
</dbReference>
<dbReference type="Gene3D" id="6.20.220.10">
    <property type="entry name" value="ClpX chaperone, C4-type zinc finger domain"/>
    <property type="match status" value="1"/>
</dbReference>
<dbReference type="Gene3D" id="3.40.50.300">
    <property type="entry name" value="P-loop containing nucleotide triphosphate hydrolases"/>
    <property type="match status" value="1"/>
</dbReference>
<dbReference type="HAMAP" id="MF_00175">
    <property type="entry name" value="ClpX"/>
    <property type="match status" value="1"/>
</dbReference>
<dbReference type="InterPro" id="IPR003593">
    <property type="entry name" value="AAA+_ATPase"/>
</dbReference>
<dbReference type="InterPro" id="IPR050052">
    <property type="entry name" value="ATP-dep_Clp_protease_ClpX"/>
</dbReference>
<dbReference type="InterPro" id="IPR003959">
    <property type="entry name" value="ATPase_AAA_core"/>
</dbReference>
<dbReference type="InterPro" id="IPR019489">
    <property type="entry name" value="Clp_ATPase_C"/>
</dbReference>
<dbReference type="InterPro" id="IPR004487">
    <property type="entry name" value="Clp_protease_ATP-bd_su_ClpX"/>
</dbReference>
<dbReference type="InterPro" id="IPR046425">
    <property type="entry name" value="ClpX_bact"/>
</dbReference>
<dbReference type="InterPro" id="IPR027417">
    <property type="entry name" value="P-loop_NTPase"/>
</dbReference>
<dbReference type="InterPro" id="IPR010603">
    <property type="entry name" value="Znf_CppX_C4"/>
</dbReference>
<dbReference type="InterPro" id="IPR038366">
    <property type="entry name" value="Znf_CppX_C4_sf"/>
</dbReference>
<dbReference type="NCBIfam" id="TIGR00382">
    <property type="entry name" value="clpX"/>
    <property type="match status" value="1"/>
</dbReference>
<dbReference type="NCBIfam" id="NF003745">
    <property type="entry name" value="PRK05342.1"/>
    <property type="match status" value="1"/>
</dbReference>
<dbReference type="PANTHER" id="PTHR48102:SF7">
    <property type="entry name" value="ATP-DEPENDENT CLP PROTEASE ATP-BINDING SUBUNIT CLPX-LIKE, MITOCHONDRIAL"/>
    <property type="match status" value="1"/>
</dbReference>
<dbReference type="PANTHER" id="PTHR48102">
    <property type="entry name" value="ATP-DEPENDENT CLP PROTEASE ATP-BINDING SUBUNIT CLPX-LIKE, MITOCHONDRIAL-RELATED"/>
    <property type="match status" value="1"/>
</dbReference>
<dbReference type="Pfam" id="PF07724">
    <property type="entry name" value="AAA_2"/>
    <property type="match status" value="1"/>
</dbReference>
<dbReference type="Pfam" id="PF10431">
    <property type="entry name" value="ClpB_D2-small"/>
    <property type="match status" value="1"/>
</dbReference>
<dbReference type="Pfam" id="PF06689">
    <property type="entry name" value="zf-C4_ClpX"/>
    <property type="match status" value="1"/>
</dbReference>
<dbReference type="SMART" id="SM00382">
    <property type="entry name" value="AAA"/>
    <property type="match status" value="1"/>
</dbReference>
<dbReference type="SMART" id="SM01086">
    <property type="entry name" value="ClpB_D2-small"/>
    <property type="match status" value="1"/>
</dbReference>
<dbReference type="SMART" id="SM00994">
    <property type="entry name" value="zf-C4_ClpX"/>
    <property type="match status" value="1"/>
</dbReference>
<dbReference type="SUPFAM" id="SSF57716">
    <property type="entry name" value="Glucocorticoid receptor-like (DNA-binding domain)"/>
    <property type="match status" value="1"/>
</dbReference>
<dbReference type="SUPFAM" id="SSF52540">
    <property type="entry name" value="P-loop containing nucleoside triphosphate hydrolases"/>
    <property type="match status" value="1"/>
</dbReference>
<dbReference type="PROSITE" id="PS51902">
    <property type="entry name" value="CLPX_ZB"/>
    <property type="match status" value="1"/>
</dbReference>